<reference evidence="6" key="1">
    <citation type="submission" date="2004-01" db="EMBL/GenBank/DDBJ databases">
        <authorList>
            <consortium name="NIH - Zebrafish Gene Collection (ZGC) project"/>
        </authorList>
    </citation>
    <scope>NUCLEOTIDE SEQUENCE [LARGE SCALE MRNA]</scope>
    <source>
        <strain evidence="6">AB</strain>
        <tissue evidence="7">Kidney</tissue>
    </source>
</reference>
<keyword id="KW-0963">Cytoplasm</keyword>
<keyword id="KW-0206">Cytoskeleton</keyword>
<keyword id="KW-0493">Microtubule</keyword>
<keyword id="KW-0539">Nucleus</keyword>
<keyword id="KW-1185">Reference proteome</keyword>
<comment type="function">
    <text evidence="1">Involved in stabilization of microtubules. May play a role in the regulation of lipogenesis (By similarity).</text>
</comment>
<comment type="subcellular location">
    <subcellularLocation>
        <location evidence="2">Nucleus</location>
    </subcellularLocation>
    <subcellularLocation>
        <location evidence="2">Cytoplasm</location>
    </subcellularLocation>
    <subcellularLocation>
        <location evidence="1">Cytoplasm</location>
        <location evidence="1">Cytoskeleton</location>
    </subcellularLocation>
    <text evidence="2">Associated with microtubules.</text>
</comment>
<comment type="similarity">
    <text evidence="3">Belongs to the SPOT14 family.</text>
</comment>
<comment type="caution">
    <text evidence="5">It is uncertain whether Met-1 or Met-2 is the initiator.</text>
</comment>
<organism>
    <name type="scientific">Danio rerio</name>
    <name type="common">Zebrafish</name>
    <name type="synonym">Brachydanio rerio</name>
    <dbReference type="NCBI Taxonomy" id="7955"/>
    <lineage>
        <taxon>Eukaryota</taxon>
        <taxon>Metazoa</taxon>
        <taxon>Chordata</taxon>
        <taxon>Craniata</taxon>
        <taxon>Vertebrata</taxon>
        <taxon>Euteleostomi</taxon>
        <taxon>Actinopterygii</taxon>
        <taxon>Neopterygii</taxon>
        <taxon>Teleostei</taxon>
        <taxon>Ostariophysi</taxon>
        <taxon>Cypriniformes</taxon>
        <taxon>Danionidae</taxon>
        <taxon>Danioninae</taxon>
        <taxon>Danio</taxon>
    </lineage>
</organism>
<protein>
    <recommendedName>
        <fullName evidence="8">Mid1-interacting protein 1-like</fullName>
    </recommendedName>
    <alternativeName>
        <fullName evidence="8">Gastrulation-specific protein G12-like</fullName>
    </alternativeName>
</protein>
<sequence>MMQLSNDSHCNKHSLLNVMNRFIAAANNMDETIMVPNLLRDVPLEDQESHASVSHNNNNNNEPSFPNKQRDMYEHYLLLKSIKNDMEWGLLKREMAGGASFLEMAVKQEELPQMKGEAVEEGPDLEGQFHYHLHGLFSVLSKLTVQADHLTNRYKREIGGGSLLR</sequence>
<dbReference type="EMBL" id="BC042326">
    <property type="protein sequence ID" value="AAH42326.1"/>
    <property type="molecule type" value="mRNA"/>
</dbReference>
<dbReference type="EMBL" id="BC044448">
    <property type="protein sequence ID" value="AAH44448.1"/>
    <property type="molecule type" value="mRNA"/>
</dbReference>
<dbReference type="EMBL" id="BC065588">
    <property type="protein sequence ID" value="AAH65588.1"/>
    <property type="molecule type" value="mRNA"/>
</dbReference>
<dbReference type="RefSeq" id="NP_998604.1">
    <property type="nucleotide sequence ID" value="NM_213439.1"/>
</dbReference>
<dbReference type="SMR" id="Q8AWD1"/>
<dbReference type="FunCoup" id="Q8AWD1">
    <property type="interactions" value="2"/>
</dbReference>
<dbReference type="STRING" id="7955.ENSDARP00000009901"/>
<dbReference type="PaxDb" id="7955-ENSDARP00000009901"/>
<dbReference type="GeneID" id="322977"/>
<dbReference type="KEGG" id="dre:322977"/>
<dbReference type="AGR" id="ZFIN:ZDB-GENE-030131-1697"/>
<dbReference type="CTD" id="322977"/>
<dbReference type="ZFIN" id="ZDB-GENE-030131-1697">
    <property type="gene designation" value="mid1ip1l"/>
</dbReference>
<dbReference type="eggNOG" id="ENOG502S1DE">
    <property type="taxonomic scope" value="Eukaryota"/>
</dbReference>
<dbReference type="InParanoid" id="Q8AWD1"/>
<dbReference type="OrthoDB" id="5951908at2759"/>
<dbReference type="PhylomeDB" id="Q8AWD1"/>
<dbReference type="Reactome" id="R-DRE-200425">
    <property type="pathway name" value="Carnitine shuttle"/>
</dbReference>
<dbReference type="PRO" id="PR:Q8AWD1"/>
<dbReference type="Proteomes" id="UP000000437">
    <property type="component" value="Chromosome 14"/>
</dbReference>
<dbReference type="GO" id="GO:0005829">
    <property type="term" value="C:cytosol"/>
    <property type="evidence" value="ECO:0000318"/>
    <property type="project" value="GO_Central"/>
</dbReference>
<dbReference type="GO" id="GO:0005874">
    <property type="term" value="C:microtubule"/>
    <property type="evidence" value="ECO:0007669"/>
    <property type="project" value="UniProtKB-KW"/>
</dbReference>
<dbReference type="GO" id="GO:0005634">
    <property type="term" value="C:nucleus"/>
    <property type="evidence" value="ECO:0007669"/>
    <property type="project" value="UniProtKB-SubCell"/>
</dbReference>
<dbReference type="GO" id="GO:0051493">
    <property type="term" value="P:regulation of cytoskeleton organization"/>
    <property type="evidence" value="ECO:0000315"/>
    <property type="project" value="ZFIN"/>
</dbReference>
<dbReference type="GO" id="GO:0046890">
    <property type="term" value="P:regulation of lipid biosynthetic process"/>
    <property type="evidence" value="ECO:0000318"/>
    <property type="project" value="GO_Central"/>
</dbReference>
<dbReference type="GO" id="GO:2000197">
    <property type="term" value="P:regulation of ribonucleoprotein complex localization"/>
    <property type="evidence" value="ECO:0000315"/>
    <property type="project" value="ZFIN"/>
</dbReference>
<dbReference type="Gene3D" id="6.10.140.1610">
    <property type="match status" value="1"/>
</dbReference>
<dbReference type="InterPro" id="IPR053719">
    <property type="entry name" value="Lipogen_MT_Stabilize_sf"/>
</dbReference>
<dbReference type="InterPro" id="IPR009786">
    <property type="entry name" value="Spot_14"/>
</dbReference>
<dbReference type="PANTHER" id="PTHR14315:SF21">
    <property type="entry name" value="MID1-INTERACTING PROTEIN 1-LIKE"/>
    <property type="match status" value="1"/>
</dbReference>
<dbReference type="PANTHER" id="PTHR14315">
    <property type="entry name" value="SPOT14 FAMILY MEMBER"/>
    <property type="match status" value="1"/>
</dbReference>
<dbReference type="Pfam" id="PF07084">
    <property type="entry name" value="Spot_14"/>
    <property type="match status" value="1"/>
</dbReference>
<accession>Q8AWD1</accession>
<feature type="chain" id="PRO_0000389526" description="Mid1-interacting protein 1-like">
    <location>
        <begin position="1"/>
        <end position="165"/>
    </location>
</feature>
<feature type="region of interest" description="Disordered" evidence="4">
    <location>
        <begin position="46"/>
        <end position="67"/>
    </location>
</feature>
<evidence type="ECO:0000250" key="1"/>
<evidence type="ECO:0000250" key="2">
    <source>
        <dbReference type="UniProtKB" id="Q9CQ20"/>
    </source>
</evidence>
<evidence type="ECO:0000255" key="3"/>
<evidence type="ECO:0000256" key="4">
    <source>
        <dbReference type="SAM" id="MobiDB-lite"/>
    </source>
</evidence>
<evidence type="ECO:0000305" key="5"/>
<evidence type="ECO:0000312" key="6">
    <source>
        <dbReference type="EMBL" id="AAH42326.1"/>
    </source>
</evidence>
<evidence type="ECO:0000312" key="7">
    <source>
        <dbReference type="EMBL" id="AAH65588.1"/>
    </source>
</evidence>
<evidence type="ECO:0000312" key="8">
    <source>
        <dbReference type="ZFIN" id="ZDB-GENE-030131-1697"/>
    </source>
</evidence>
<name>M1I1L_DANRE</name>
<proteinExistence type="evidence at transcript level"/>
<gene>
    <name evidence="8" type="primary">mid1ip1l</name>
    <name evidence="8" type="synonym">g12l</name>
    <name evidence="8" type="synonym">mid1ip1</name>
    <name type="ORF">zgc:112497</name>
    <name type="ORF">zgc:55658</name>
    <name type="ORF">zgc:55736</name>
    <name type="ORF">zgc:77189</name>
</gene>